<name>PUR5_ECO7I</name>
<evidence type="ECO:0000255" key="1">
    <source>
        <dbReference type="HAMAP-Rule" id="MF_00741"/>
    </source>
</evidence>
<comment type="catalytic activity">
    <reaction evidence="1">
        <text>2-formamido-N(1)-(5-O-phospho-beta-D-ribosyl)acetamidine + ATP = 5-amino-1-(5-phospho-beta-D-ribosyl)imidazole + ADP + phosphate + H(+)</text>
        <dbReference type="Rhea" id="RHEA:23032"/>
        <dbReference type="ChEBI" id="CHEBI:15378"/>
        <dbReference type="ChEBI" id="CHEBI:30616"/>
        <dbReference type="ChEBI" id="CHEBI:43474"/>
        <dbReference type="ChEBI" id="CHEBI:137981"/>
        <dbReference type="ChEBI" id="CHEBI:147287"/>
        <dbReference type="ChEBI" id="CHEBI:456216"/>
        <dbReference type="EC" id="6.3.3.1"/>
    </reaction>
</comment>
<comment type="pathway">
    <text evidence="1">Purine metabolism; IMP biosynthesis via de novo pathway; 5-amino-1-(5-phospho-D-ribosyl)imidazole from N(2)-formyl-N(1)-(5-phospho-D-ribosyl)glycinamide: step 2/2.</text>
</comment>
<comment type="subcellular location">
    <subcellularLocation>
        <location evidence="1">Cytoplasm</location>
    </subcellularLocation>
</comment>
<comment type="similarity">
    <text evidence="1">Belongs to the AIR synthase family.</text>
</comment>
<sequence>MTDKTSLSYKDAGVDIDAGNALVGRIKGVVKKTRRPEVMGGLGGFGALCALPQKYREPVLVSGTDGVGTKLRLSMDLKRHDTIGIDLVAMCVNDLVVQGAEPLFFLDYYATGKLDVDTASAVISGIAEGCLQSGCSLVGGETAEMPGMYHGEDYDVAGFCVGVVEKSEIIDGSKVSDGDVLIALGSSGPHSNGYSLVRKILEVSGCDPQTTELDGKPLADHLLAPTRIYVKSVLELIEKVDVHAIAHLTGGGFWENIPRVLPDNTQAVIDESSWQWPEVFNWLQTAGNVERHEMYRTFNCGVGMIIALPAPEVDKALALLNANGENAWKIGIIKASDSEQRVVIE</sequence>
<proteinExistence type="inferred from homology"/>
<dbReference type="EC" id="6.3.3.1" evidence="1"/>
<dbReference type="EMBL" id="CU928164">
    <property type="protein sequence ID" value="CAR18763.1"/>
    <property type="molecule type" value="Genomic_DNA"/>
</dbReference>
<dbReference type="RefSeq" id="WP_012602436.1">
    <property type="nucleotide sequence ID" value="NC_011750.1"/>
</dbReference>
<dbReference type="RefSeq" id="YP_002408585.1">
    <property type="nucleotide sequence ID" value="NC_011750.1"/>
</dbReference>
<dbReference type="SMR" id="B7NQN8"/>
<dbReference type="STRING" id="585057.ECIAI39_2640"/>
<dbReference type="KEGG" id="ect:ECIAI39_2640"/>
<dbReference type="PATRIC" id="fig|585057.6.peg.2746"/>
<dbReference type="HOGENOM" id="CLU_047116_0_0_6"/>
<dbReference type="UniPathway" id="UPA00074">
    <property type="reaction ID" value="UER00129"/>
</dbReference>
<dbReference type="Proteomes" id="UP000000749">
    <property type="component" value="Chromosome"/>
</dbReference>
<dbReference type="GO" id="GO:0005829">
    <property type="term" value="C:cytosol"/>
    <property type="evidence" value="ECO:0007669"/>
    <property type="project" value="TreeGrafter"/>
</dbReference>
<dbReference type="GO" id="GO:0005524">
    <property type="term" value="F:ATP binding"/>
    <property type="evidence" value="ECO:0007669"/>
    <property type="project" value="UniProtKB-KW"/>
</dbReference>
<dbReference type="GO" id="GO:0004637">
    <property type="term" value="F:phosphoribosylamine-glycine ligase activity"/>
    <property type="evidence" value="ECO:0007669"/>
    <property type="project" value="TreeGrafter"/>
</dbReference>
<dbReference type="GO" id="GO:0004641">
    <property type="term" value="F:phosphoribosylformylglycinamidine cyclo-ligase activity"/>
    <property type="evidence" value="ECO:0007669"/>
    <property type="project" value="UniProtKB-UniRule"/>
</dbReference>
<dbReference type="GO" id="GO:0006189">
    <property type="term" value="P:'de novo' IMP biosynthetic process"/>
    <property type="evidence" value="ECO:0007669"/>
    <property type="project" value="UniProtKB-UniRule"/>
</dbReference>
<dbReference type="GO" id="GO:0046084">
    <property type="term" value="P:adenine biosynthetic process"/>
    <property type="evidence" value="ECO:0007669"/>
    <property type="project" value="TreeGrafter"/>
</dbReference>
<dbReference type="CDD" id="cd02196">
    <property type="entry name" value="PurM"/>
    <property type="match status" value="1"/>
</dbReference>
<dbReference type="FunFam" id="3.30.1330.10:FF:000001">
    <property type="entry name" value="Phosphoribosylformylglycinamidine cyclo-ligase"/>
    <property type="match status" value="1"/>
</dbReference>
<dbReference type="FunFam" id="3.90.650.10:FF:000001">
    <property type="entry name" value="Phosphoribosylformylglycinamidine cyclo-ligase"/>
    <property type="match status" value="1"/>
</dbReference>
<dbReference type="Gene3D" id="3.90.650.10">
    <property type="entry name" value="PurM-like C-terminal domain"/>
    <property type="match status" value="1"/>
</dbReference>
<dbReference type="Gene3D" id="3.30.1330.10">
    <property type="entry name" value="PurM-like, N-terminal domain"/>
    <property type="match status" value="1"/>
</dbReference>
<dbReference type="HAMAP" id="MF_00741">
    <property type="entry name" value="AIRS"/>
    <property type="match status" value="1"/>
</dbReference>
<dbReference type="InterPro" id="IPR010918">
    <property type="entry name" value="PurM-like_C_dom"/>
</dbReference>
<dbReference type="InterPro" id="IPR036676">
    <property type="entry name" value="PurM-like_C_sf"/>
</dbReference>
<dbReference type="InterPro" id="IPR016188">
    <property type="entry name" value="PurM-like_N"/>
</dbReference>
<dbReference type="InterPro" id="IPR036921">
    <property type="entry name" value="PurM-like_N_sf"/>
</dbReference>
<dbReference type="InterPro" id="IPR004733">
    <property type="entry name" value="PurM_cligase"/>
</dbReference>
<dbReference type="NCBIfam" id="TIGR00878">
    <property type="entry name" value="purM"/>
    <property type="match status" value="1"/>
</dbReference>
<dbReference type="PANTHER" id="PTHR10520:SF12">
    <property type="entry name" value="TRIFUNCTIONAL PURINE BIOSYNTHETIC PROTEIN ADENOSINE-3"/>
    <property type="match status" value="1"/>
</dbReference>
<dbReference type="PANTHER" id="PTHR10520">
    <property type="entry name" value="TRIFUNCTIONAL PURINE BIOSYNTHETIC PROTEIN ADENOSINE-3-RELATED"/>
    <property type="match status" value="1"/>
</dbReference>
<dbReference type="Pfam" id="PF00586">
    <property type="entry name" value="AIRS"/>
    <property type="match status" value="1"/>
</dbReference>
<dbReference type="Pfam" id="PF02769">
    <property type="entry name" value="AIRS_C"/>
    <property type="match status" value="1"/>
</dbReference>
<dbReference type="SUPFAM" id="SSF56042">
    <property type="entry name" value="PurM C-terminal domain-like"/>
    <property type="match status" value="1"/>
</dbReference>
<dbReference type="SUPFAM" id="SSF55326">
    <property type="entry name" value="PurM N-terminal domain-like"/>
    <property type="match status" value="1"/>
</dbReference>
<reference key="1">
    <citation type="journal article" date="2009" name="PLoS Genet.">
        <title>Organised genome dynamics in the Escherichia coli species results in highly diverse adaptive paths.</title>
        <authorList>
            <person name="Touchon M."/>
            <person name="Hoede C."/>
            <person name="Tenaillon O."/>
            <person name="Barbe V."/>
            <person name="Baeriswyl S."/>
            <person name="Bidet P."/>
            <person name="Bingen E."/>
            <person name="Bonacorsi S."/>
            <person name="Bouchier C."/>
            <person name="Bouvet O."/>
            <person name="Calteau A."/>
            <person name="Chiapello H."/>
            <person name="Clermont O."/>
            <person name="Cruveiller S."/>
            <person name="Danchin A."/>
            <person name="Diard M."/>
            <person name="Dossat C."/>
            <person name="Karoui M.E."/>
            <person name="Frapy E."/>
            <person name="Garry L."/>
            <person name="Ghigo J.M."/>
            <person name="Gilles A.M."/>
            <person name="Johnson J."/>
            <person name="Le Bouguenec C."/>
            <person name="Lescat M."/>
            <person name="Mangenot S."/>
            <person name="Martinez-Jehanne V."/>
            <person name="Matic I."/>
            <person name="Nassif X."/>
            <person name="Oztas S."/>
            <person name="Petit M.A."/>
            <person name="Pichon C."/>
            <person name="Rouy Z."/>
            <person name="Ruf C.S."/>
            <person name="Schneider D."/>
            <person name="Tourret J."/>
            <person name="Vacherie B."/>
            <person name="Vallenet D."/>
            <person name="Medigue C."/>
            <person name="Rocha E.P.C."/>
            <person name="Denamur E."/>
        </authorList>
    </citation>
    <scope>NUCLEOTIDE SEQUENCE [LARGE SCALE GENOMIC DNA]</scope>
    <source>
        <strain>IAI39 / ExPEC</strain>
    </source>
</reference>
<accession>B7NQN8</accession>
<feature type="chain" id="PRO_1000193021" description="Phosphoribosylformylglycinamidine cyclo-ligase">
    <location>
        <begin position="1"/>
        <end position="345"/>
    </location>
</feature>
<keyword id="KW-0067">ATP-binding</keyword>
<keyword id="KW-0963">Cytoplasm</keyword>
<keyword id="KW-0436">Ligase</keyword>
<keyword id="KW-0547">Nucleotide-binding</keyword>
<keyword id="KW-0658">Purine biosynthesis</keyword>
<protein>
    <recommendedName>
        <fullName evidence="1">Phosphoribosylformylglycinamidine cyclo-ligase</fullName>
        <ecNumber evidence="1">6.3.3.1</ecNumber>
    </recommendedName>
    <alternativeName>
        <fullName evidence="1">AIR synthase</fullName>
    </alternativeName>
    <alternativeName>
        <fullName evidence="1">AIRS</fullName>
    </alternativeName>
    <alternativeName>
        <fullName evidence="1">Phosphoribosyl-aminoimidazole synthetase</fullName>
    </alternativeName>
</protein>
<gene>
    <name evidence="1" type="primary">purM</name>
    <name type="ordered locus">ECIAI39_2640</name>
</gene>
<organism>
    <name type="scientific">Escherichia coli O7:K1 (strain IAI39 / ExPEC)</name>
    <dbReference type="NCBI Taxonomy" id="585057"/>
    <lineage>
        <taxon>Bacteria</taxon>
        <taxon>Pseudomonadati</taxon>
        <taxon>Pseudomonadota</taxon>
        <taxon>Gammaproteobacteria</taxon>
        <taxon>Enterobacterales</taxon>
        <taxon>Enterobacteriaceae</taxon>
        <taxon>Escherichia</taxon>
    </lineage>
</organism>